<proteinExistence type="inferred from homology"/>
<gene>
    <name type="ordered locus">M1425_1588</name>
</gene>
<protein>
    <recommendedName>
        <fullName evidence="1">Arginine decarboxylase proenzyme</fullName>
        <shortName evidence="1">ADC</shortName>
        <shortName evidence="1">ArgDC</shortName>
        <ecNumber evidence="1">4.1.1.19</ecNumber>
    </recommendedName>
    <alternativeName>
        <fullName evidence="1">Pyruvoyl-dependent arginine decarboxylase</fullName>
    </alternativeName>
    <component>
        <recommendedName>
            <fullName evidence="1">Arginine decarboxylase beta chain</fullName>
        </recommendedName>
    </component>
    <component>
        <recommendedName>
            <fullName evidence="1">Arginine decarboxylase alpha chain</fullName>
        </recommendedName>
    </component>
</protein>
<dbReference type="EC" id="4.1.1.19" evidence="1"/>
<dbReference type="EMBL" id="CP001400">
    <property type="protein sequence ID" value="ACP38337.1"/>
    <property type="molecule type" value="Genomic_DNA"/>
</dbReference>
<dbReference type="SMR" id="C3MWN7"/>
<dbReference type="KEGG" id="sia:M1425_1588"/>
<dbReference type="HOGENOM" id="CLU_125470_2_1_2"/>
<dbReference type="UniPathway" id="UPA00186">
    <property type="reaction ID" value="UER00284"/>
</dbReference>
<dbReference type="Proteomes" id="UP000001350">
    <property type="component" value="Chromosome"/>
</dbReference>
<dbReference type="GO" id="GO:0005829">
    <property type="term" value="C:cytosol"/>
    <property type="evidence" value="ECO:0007669"/>
    <property type="project" value="TreeGrafter"/>
</dbReference>
<dbReference type="GO" id="GO:0008792">
    <property type="term" value="F:arginine decarboxylase activity"/>
    <property type="evidence" value="ECO:0007669"/>
    <property type="project" value="UniProtKB-UniRule"/>
</dbReference>
<dbReference type="GO" id="GO:0006527">
    <property type="term" value="P:arginine catabolic process"/>
    <property type="evidence" value="ECO:0007669"/>
    <property type="project" value="UniProtKB-UniRule"/>
</dbReference>
<dbReference type="GO" id="GO:0006596">
    <property type="term" value="P:polyamine biosynthetic process"/>
    <property type="evidence" value="ECO:0007669"/>
    <property type="project" value="UniProtKB-UniRule"/>
</dbReference>
<dbReference type="FunFam" id="3.60.90.10:FF:000005">
    <property type="entry name" value="Arginine decarboxylase proenzyme"/>
    <property type="match status" value="1"/>
</dbReference>
<dbReference type="Gene3D" id="3.60.90.10">
    <property type="entry name" value="S-adenosylmethionine decarboxylase"/>
    <property type="match status" value="1"/>
</dbReference>
<dbReference type="HAMAP" id="MF_00464">
    <property type="entry name" value="AdoMetDC_1"/>
    <property type="match status" value="1"/>
</dbReference>
<dbReference type="HAMAP" id="MF_01298">
    <property type="entry name" value="ArgDC"/>
    <property type="match status" value="1"/>
</dbReference>
<dbReference type="InterPro" id="IPR003826">
    <property type="entry name" value="AdoMetDC_fam_prok"/>
</dbReference>
<dbReference type="InterPro" id="IPR027549">
    <property type="entry name" value="ArgDC"/>
</dbReference>
<dbReference type="InterPro" id="IPR016067">
    <property type="entry name" value="S-AdoMet_deCO2ase_core"/>
</dbReference>
<dbReference type="InterPro" id="IPR017716">
    <property type="entry name" value="S-AdoMet_deCOase_pro-enz"/>
</dbReference>
<dbReference type="NCBIfam" id="TIGR03330">
    <property type="entry name" value="SAM_DCase_Bsu"/>
    <property type="match status" value="1"/>
</dbReference>
<dbReference type="PANTHER" id="PTHR33866">
    <property type="entry name" value="S-ADENOSYLMETHIONINE DECARBOXYLASE PROENZYME"/>
    <property type="match status" value="1"/>
</dbReference>
<dbReference type="PANTHER" id="PTHR33866:SF2">
    <property type="entry name" value="S-ADENOSYLMETHIONINE DECARBOXYLASE PROENZYME"/>
    <property type="match status" value="1"/>
</dbReference>
<dbReference type="Pfam" id="PF02675">
    <property type="entry name" value="AdoMet_dc"/>
    <property type="match status" value="1"/>
</dbReference>
<dbReference type="SUPFAM" id="SSF56276">
    <property type="entry name" value="S-adenosylmethionine decarboxylase"/>
    <property type="match status" value="1"/>
</dbReference>
<sequence length="134" mass="15219">MSEQEVLQKNNSPEGKEDRIIGKHVFGNLYDIDAERLNDKEFLEKLVLEAVNIAHMKLVEIKAWSFGGKKGGVSVIALVEESHIALHTWNEYNYATLDVYTCGEDSDPQSAFAHIVNALNPKRYQMFYADRSSQ</sequence>
<keyword id="KW-0068">Autocatalytic cleavage</keyword>
<keyword id="KW-0210">Decarboxylase</keyword>
<keyword id="KW-0456">Lyase</keyword>
<keyword id="KW-0620">Polyamine biosynthesis</keyword>
<keyword id="KW-0670">Pyruvate</keyword>
<keyword id="KW-0704">Schiff base</keyword>
<keyword id="KW-0865">Zymogen</keyword>
<accession>C3MWN7</accession>
<name>ARGDC_SACI4</name>
<organism>
    <name type="scientific">Saccharolobus islandicus (strain M.14.25 / Kamchatka #1)</name>
    <name type="common">Sulfolobus islandicus</name>
    <dbReference type="NCBI Taxonomy" id="427317"/>
    <lineage>
        <taxon>Archaea</taxon>
        <taxon>Thermoproteota</taxon>
        <taxon>Thermoprotei</taxon>
        <taxon>Sulfolobales</taxon>
        <taxon>Sulfolobaceae</taxon>
        <taxon>Saccharolobus</taxon>
    </lineage>
</organism>
<comment type="function">
    <text evidence="1">Specifically catalyzes the decarboxylation of L-arginine to agmatine. Has no S-adenosylmethionine decarboxylase (AdoMetDC) activity.</text>
</comment>
<comment type="catalytic activity">
    <reaction evidence="1">
        <text>L-arginine + H(+) = agmatine + CO2</text>
        <dbReference type="Rhea" id="RHEA:17641"/>
        <dbReference type="ChEBI" id="CHEBI:15378"/>
        <dbReference type="ChEBI" id="CHEBI:16526"/>
        <dbReference type="ChEBI" id="CHEBI:32682"/>
        <dbReference type="ChEBI" id="CHEBI:58145"/>
        <dbReference type="EC" id="4.1.1.19"/>
    </reaction>
</comment>
<comment type="cofactor">
    <cofactor evidence="1">
        <name>pyruvate</name>
        <dbReference type="ChEBI" id="CHEBI:15361"/>
    </cofactor>
    <text evidence="1">Binds 1 pyruvoyl group covalently per subunit.</text>
</comment>
<comment type="pathway">
    <text evidence="1">Amine and polyamine biosynthesis; agmatine biosynthesis; agmatine from L-arginine: step 1/1.</text>
</comment>
<comment type="subunit">
    <text evidence="1">Heterooctamer of four alpha and four beta chains arranged as a tetramer of alpha/beta heterodimers.</text>
</comment>
<comment type="PTM">
    <text evidence="1">Is synthesized initially as an inactive proenzyme. Formation of the active enzyme involves a self-maturation process in which the active site pyruvoyl group is generated from an internal serine residue via an autocatalytic post-translational modification. Two non-identical subunits are generated from the proenzyme in this reaction, and the pyruvate is formed at the N-terminus of the alpha chain, which is derived from the carboxyl end of the proenzyme. The post-translation cleavage follows an unusual pathway, termed non-hydrolytic serinolysis, in which the side chain hydroxyl group of the serine supplies its oxygen atom to form the C-terminus of the beta chain, while the remainder of the serine residue undergoes an oxidative deamination to produce ammonia and the pyruvoyl group blocking the N-terminus of the alpha chain.</text>
</comment>
<comment type="similarity">
    <text evidence="1">Belongs to the prokaryotic AdoMetDC family. Type 1 subfamily.</text>
</comment>
<evidence type="ECO:0000255" key="1">
    <source>
        <dbReference type="HAMAP-Rule" id="MF_01298"/>
    </source>
</evidence>
<reference key="1">
    <citation type="journal article" date="2009" name="Proc. Natl. Acad. Sci. U.S.A.">
        <title>Biogeography of the Sulfolobus islandicus pan-genome.</title>
        <authorList>
            <person name="Reno M.L."/>
            <person name="Held N.L."/>
            <person name="Fields C.J."/>
            <person name="Burke P.V."/>
            <person name="Whitaker R.J."/>
        </authorList>
    </citation>
    <scope>NUCLEOTIDE SEQUENCE [LARGE SCALE GENOMIC DNA]</scope>
    <source>
        <strain>M.14.25 / Kamchatka #1</strain>
    </source>
</reference>
<feature type="chain" id="PRO_1000214231" description="Arginine decarboxylase beta chain" evidence="1">
    <location>
        <begin position="1"/>
        <end position="81"/>
    </location>
</feature>
<feature type="chain" id="PRO_1000214232" description="Arginine decarboxylase alpha chain" evidence="1">
    <location>
        <begin position="82"/>
        <end position="134"/>
    </location>
</feature>
<feature type="active site" description="Schiff-base intermediate with substrate; via pyruvic acid" evidence="1">
    <location>
        <position position="82"/>
    </location>
</feature>
<feature type="active site" description="Proton acceptor; for processing activity" evidence="1">
    <location>
        <position position="87"/>
    </location>
</feature>
<feature type="active site" description="Proton donor; for catalytic activity" evidence="1">
    <location>
        <position position="102"/>
    </location>
</feature>
<feature type="site" description="Cleavage (non-hydrolytic); by autolysis" evidence="1">
    <location>
        <begin position="81"/>
        <end position="82"/>
    </location>
</feature>
<feature type="modified residue" description="Pyruvic acid (Ser); by autocatalysis" evidence="1">
    <location>
        <position position="82"/>
    </location>
</feature>